<organism>
    <name type="scientific">Leptothrix cholodnii (strain ATCC 51168 / LMG 8142 / SP-6)</name>
    <name type="common">Leptothrix discophora (strain SP-6)</name>
    <dbReference type="NCBI Taxonomy" id="395495"/>
    <lineage>
        <taxon>Bacteria</taxon>
        <taxon>Pseudomonadati</taxon>
        <taxon>Pseudomonadota</taxon>
        <taxon>Betaproteobacteria</taxon>
        <taxon>Burkholderiales</taxon>
        <taxon>Sphaerotilaceae</taxon>
        <taxon>Leptothrix</taxon>
    </lineage>
</organism>
<protein>
    <recommendedName>
        <fullName evidence="1">4-hydroxy-tetrahydrodipicolinate synthase</fullName>
        <shortName evidence="1">HTPA synthase</shortName>
        <ecNumber evidence="1">4.3.3.7</ecNumber>
    </recommendedName>
</protein>
<reference key="1">
    <citation type="submission" date="2008-03" db="EMBL/GenBank/DDBJ databases">
        <title>Complete sequence of Leptothrix cholodnii SP-6.</title>
        <authorList>
            <consortium name="US DOE Joint Genome Institute"/>
            <person name="Copeland A."/>
            <person name="Lucas S."/>
            <person name="Lapidus A."/>
            <person name="Glavina del Rio T."/>
            <person name="Dalin E."/>
            <person name="Tice H."/>
            <person name="Bruce D."/>
            <person name="Goodwin L."/>
            <person name="Pitluck S."/>
            <person name="Chertkov O."/>
            <person name="Brettin T."/>
            <person name="Detter J.C."/>
            <person name="Han C."/>
            <person name="Kuske C.R."/>
            <person name="Schmutz J."/>
            <person name="Larimer F."/>
            <person name="Land M."/>
            <person name="Hauser L."/>
            <person name="Kyrpides N."/>
            <person name="Lykidis A."/>
            <person name="Emerson D."/>
            <person name="Richardson P."/>
        </authorList>
    </citation>
    <scope>NUCLEOTIDE SEQUENCE [LARGE SCALE GENOMIC DNA]</scope>
    <source>
        <strain>ATCC 51168 / LMG 8142 / SP-6</strain>
    </source>
</reference>
<evidence type="ECO:0000255" key="1">
    <source>
        <dbReference type="HAMAP-Rule" id="MF_00418"/>
    </source>
</evidence>
<evidence type="ECO:0000305" key="2"/>
<feature type="chain" id="PRO_1000124049" description="4-hydroxy-tetrahydrodipicolinate synthase">
    <location>
        <begin position="1"/>
        <end position="293"/>
    </location>
</feature>
<feature type="active site" description="Proton donor/acceptor" evidence="1">
    <location>
        <position position="135"/>
    </location>
</feature>
<feature type="active site" description="Schiff-base intermediate with substrate" evidence="1">
    <location>
        <position position="163"/>
    </location>
</feature>
<feature type="binding site" evidence="1">
    <location>
        <position position="47"/>
    </location>
    <ligand>
        <name>pyruvate</name>
        <dbReference type="ChEBI" id="CHEBI:15361"/>
    </ligand>
</feature>
<feature type="binding site" evidence="1">
    <location>
        <position position="205"/>
    </location>
    <ligand>
        <name>pyruvate</name>
        <dbReference type="ChEBI" id="CHEBI:15361"/>
    </ligand>
</feature>
<feature type="site" description="Part of a proton relay during catalysis" evidence="1">
    <location>
        <position position="46"/>
    </location>
</feature>
<feature type="site" description="Part of a proton relay during catalysis" evidence="1">
    <location>
        <position position="109"/>
    </location>
</feature>
<dbReference type="EC" id="4.3.3.7" evidence="1"/>
<dbReference type="EMBL" id="CP001013">
    <property type="protein sequence ID" value="ACB34905.1"/>
    <property type="molecule type" value="Genomic_DNA"/>
</dbReference>
<dbReference type="RefSeq" id="WP_012347661.1">
    <property type="nucleotide sequence ID" value="NC_010524.1"/>
</dbReference>
<dbReference type="SMR" id="B1Y7F0"/>
<dbReference type="STRING" id="395495.Lcho_2640"/>
<dbReference type="KEGG" id="lch:Lcho_2640"/>
<dbReference type="eggNOG" id="COG0329">
    <property type="taxonomic scope" value="Bacteria"/>
</dbReference>
<dbReference type="HOGENOM" id="CLU_049343_7_1_4"/>
<dbReference type="OrthoDB" id="9782828at2"/>
<dbReference type="UniPathway" id="UPA00034">
    <property type="reaction ID" value="UER00017"/>
</dbReference>
<dbReference type="Proteomes" id="UP000001693">
    <property type="component" value="Chromosome"/>
</dbReference>
<dbReference type="GO" id="GO:0005829">
    <property type="term" value="C:cytosol"/>
    <property type="evidence" value="ECO:0007669"/>
    <property type="project" value="TreeGrafter"/>
</dbReference>
<dbReference type="GO" id="GO:0008840">
    <property type="term" value="F:4-hydroxy-tetrahydrodipicolinate synthase activity"/>
    <property type="evidence" value="ECO:0007669"/>
    <property type="project" value="UniProtKB-UniRule"/>
</dbReference>
<dbReference type="GO" id="GO:0019877">
    <property type="term" value="P:diaminopimelate biosynthetic process"/>
    <property type="evidence" value="ECO:0007669"/>
    <property type="project" value="UniProtKB-UniRule"/>
</dbReference>
<dbReference type="GO" id="GO:0009089">
    <property type="term" value="P:lysine biosynthetic process via diaminopimelate"/>
    <property type="evidence" value="ECO:0007669"/>
    <property type="project" value="UniProtKB-UniRule"/>
</dbReference>
<dbReference type="CDD" id="cd00950">
    <property type="entry name" value="DHDPS"/>
    <property type="match status" value="1"/>
</dbReference>
<dbReference type="Gene3D" id="3.20.20.70">
    <property type="entry name" value="Aldolase class I"/>
    <property type="match status" value="1"/>
</dbReference>
<dbReference type="HAMAP" id="MF_00418">
    <property type="entry name" value="DapA"/>
    <property type="match status" value="1"/>
</dbReference>
<dbReference type="InterPro" id="IPR013785">
    <property type="entry name" value="Aldolase_TIM"/>
</dbReference>
<dbReference type="InterPro" id="IPR005263">
    <property type="entry name" value="DapA"/>
</dbReference>
<dbReference type="InterPro" id="IPR002220">
    <property type="entry name" value="DapA-like"/>
</dbReference>
<dbReference type="InterPro" id="IPR020625">
    <property type="entry name" value="Schiff_base-form_aldolases_AS"/>
</dbReference>
<dbReference type="NCBIfam" id="TIGR00674">
    <property type="entry name" value="dapA"/>
    <property type="match status" value="1"/>
</dbReference>
<dbReference type="PANTHER" id="PTHR12128:SF66">
    <property type="entry name" value="4-HYDROXY-2-OXOGLUTARATE ALDOLASE, MITOCHONDRIAL"/>
    <property type="match status" value="1"/>
</dbReference>
<dbReference type="PANTHER" id="PTHR12128">
    <property type="entry name" value="DIHYDRODIPICOLINATE SYNTHASE"/>
    <property type="match status" value="1"/>
</dbReference>
<dbReference type="Pfam" id="PF00701">
    <property type="entry name" value="DHDPS"/>
    <property type="match status" value="1"/>
</dbReference>
<dbReference type="PIRSF" id="PIRSF001365">
    <property type="entry name" value="DHDPS"/>
    <property type="match status" value="1"/>
</dbReference>
<dbReference type="PRINTS" id="PR00146">
    <property type="entry name" value="DHPICSNTHASE"/>
</dbReference>
<dbReference type="SMART" id="SM01130">
    <property type="entry name" value="DHDPS"/>
    <property type="match status" value="1"/>
</dbReference>
<dbReference type="SUPFAM" id="SSF51569">
    <property type="entry name" value="Aldolase"/>
    <property type="match status" value="1"/>
</dbReference>
<dbReference type="PROSITE" id="PS00666">
    <property type="entry name" value="DHDPS_2"/>
    <property type="match status" value="1"/>
</dbReference>
<proteinExistence type="inferred from homology"/>
<comment type="function">
    <text evidence="1">Catalyzes the condensation of (S)-aspartate-beta-semialdehyde [(S)-ASA] and pyruvate to 4-hydroxy-tetrahydrodipicolinate (HTPA).</text>
</comment>
<comment type="catalytic activity">
    <reaction evidence="1">
        <text>L-aspartate 4-semialdehyde + pyruvate = (2S,4S)-4-hydroxy-2,3,4,5-tetrahydrodipicolinate + H2O + H(+)</text>
        <dbReference type="Rhea" id="RHEA:34171"/>
        <dbReference type="ChEBI" id="CHEBI:15361"/>
        <dbReference type="ChEBI" id="CHEBI:15377"/>
        <dbReference type="ChEBI" id="CHEBI:15378"/>
        <dbReference type="ChEBI" id="CHEBI:67139"/>
        <dbReference type="ChEBI" id="CHEBI:537519"/>
        <dbReference type="EC" id="4.3.3.7"/>
    </reaction>
</comment>
<comment type="pathway">
    <text evidence="1">Amino-acid biosynthesis; L-lysine biosynthesis via DAP pathway; (S)-tetrahydrodipicolinate from L-aspartate: step 3/4.</text>
</comment>
<comment type="subunit">
    <text evidence="1">Homotetramer; dimer of dimers.</text>
</comment>
<comment type="subcellular location">
    <subcellularLocation>
        <location evidence="1">Cytoplasm</location>
    </subcellularLocation>
</comment>
<comment type="similarity">
    <text evidence="1">Belongs to the DapA family.</text>
</comment>
<comment type="caution">
    <text evidence="2">Was originally thought to be a dihydrodipicolinate synthase (DHDPS), catalyzing the condensation of (S)-aspartate-beta-semialdehyde [(S)-ASA] and pyruvate to dihydrodipicolinate (DHDP). However, it was shown in E.coli that the product of the enzymatic reaction is not dihydrodipicolinate but in fact (4S)-4-hydroxy-2,3,4,5-tetrahydro-(2S)-dipicolinic acid (HTPA), and that the consecutive dehydration reaction leading to DHDP is not spontaneous but catalyzed by DapB.</text>
</comment>
<keyword id="KW-0028">Amino-acid biosynthesis</keyword>
<keyword id="KW-0963">Cytoplasm</keyword>
<keyword id="KW-0220">Diaminopimelate biosynthesis</keyword>
<keyword id="KW-0456">Lyase</keyword>
<keyword id="KW-0457">Lysine biosynthesis</keyword>
<keyword id="KW-1185">Reference proteome</keyword>
<keyword id="KW-0704">Schiff base</keyword>
<gene>
    <name evidence="1" type="primary">dapA</name>
    <name type="ordered locus">Lcho_2640</name>
</gene>
<sequence>MNPIVGSIVALVTPMLEDGSVDYPTLRQLIDWHIAEGTACIGVVGTTGESPTVSVEEHCEIIRVAVEQTAGRVPVMAGAGGNSTREAIELARFAKKVGADCTLSVVPYYNKPSQEGIYQHFRAIAEAVDIPTVLYNVPGRTVADMLPETTLRLAQVPGVIGIKEATGNIERACWLIKQAPAGFSIYSGDDGTAVALMLLGGHGNVSVTANVAPRAMADLCRAAVAGDARTAREIHFKLLGLHKLLFAEPNPTPVKWAMHRLGLCAATMRLPMVPMSAHLEAGLEAAMREAGLL</sequence>
<name>DAPA_LEPCP</name>
<accession>B1Y7F0</accession>